<name>VAPB1_RICFE</name>
<comment type="function">
    <text evidence="1">Antitoxin component of a type II toxin-antitoxin (TA) system. Upon expression in E.coli neutralizes the effect of cognate toxin VapC1, partially inhibits the RNase activity of VapC1 in vitro.</text>
</comment>
<sequence>MQLFLRINMAQIIRATEFVRSFSDIMNRVYYKGESFDVQKGNHIVARITPAETKPSIAVRDLEEAFKNGPHLDPEDADQFMKDIEEIRRSTRQDIKKLVERWD</sequence>
<evidence type="ECO:0000269" key="1">
    <source>
    </source>
</evidence>
<organism>
    <name type="scientific">Rickettsia felis (strain ATCC VR-1525 / URRWXCal2)</name>
    <name type="common">Rickettsia azadi</name>
    <dbReference type="NCBI Taxonomy" id="315456"/>
    <lineage>
        <taxon>Bacteria</taxon>
        <taxon>Pseudomonadati</taxon>
        <taxon>Pseudomonadota</taxon>
        <taxon>Alphaproteobacteria</taxon>
        <taxon>Rickettsiales</taxon>
        <taxon>Rickettsiaceae</taxon>
        <taxon>Rickettsieae</taxon>
        <taxon>Rickettsia</taxon>
        <taxon>spotted fever group</taxon>
    </lineage>
</organism>
<protein>
    <recommendedName>
        <fullName>Antitoxin VapB1</fullName>
    </recommendedName>
</protein>
<keyword id="KW-1277">Toxin-antitoxin system</keyword>
<accession>Q4UMA9</accession>
<dbReference type="EMBL" id="CP000053">
    <property type="protein sequence ID" value="AAY61308.1"/>
    <property type="molecule type" value="Genomic_DNA"/>
</dbReference>
<dbReference type="SMR" id="Q4UMA9"/>
<dbReference type="STRING" id="315456.RF_0457"/>
<dbReference type="KEGG" id="rfe:RF_0457"/>
<dbReference type="HOGENOM" id="CLU_2384284_0_0_5"/>
<dbReference type="Proteomes" id="UP000008548">
    <property type="component" value="Chromosome"/>
</dbReference>
<proteinExistence type="predicted"/>
<feature type="chain" id="PRO_0000432239" description="Antitoxin VapB1">
    <location>
        <begin position="1"/>
        <end position="103"/>
    </location>
</feature>
<reference key="1">
    <citation type="journal article" date="2005" name="PLoS Biol.">
        <title>The genome sequence of Rickettsia felis identifies the first putative conjugative plasmid in an obligate intracellular parasite.</title>
        <authorList>
            <person name="Ogata H."/>
            <person name="Renesto P."/>
            <person name="Audic S."/>
            <person name="Robert C."/>
            <person name="Blanc G."/>
            <person name="Fournier P.-E."/>
            <person name="Parinello H."/>
            <person name="Claverie J.-M."/>
            <person name="Raoult D."/>
        </authorList>
    </citation>
    <scope>NUCLEOTIDE SEQUENCE [LARGE SCALE GENOMIC DNA]</scope>
    <source>
        <strain>ATCC VR-1525 / URRWXCal2</strain>
    </source>
</reference>
<reference key="2">
    <citation type="journal article" date="2011" name="PLoS ONE">
        <title>Effect of rickettsial toxin VapC on its eukaryotic host.</title>
        <authorList>
            <person name="Audoly G."/>
            <person name="Vincentelli R."/>
            <person name="Edouard S."/>
            <person name="Georgiades K."/>
            <person name="Mediannikov O."/>
            <person name="Gimenez G."/>
            <person name="Socolovschi C."/>
            <person name="Mege J.L."/>
            <person name="Cambillau C."/>
            <person name="Raoult D."/>
        </authorList>
    </citation>
    <scope>FUNCTION</scope>
    <scope>EXPRESSION IN E.COLI</scope>
    <source>
        <strain>ATCC VR-1525 / URRWXCal2</strain>
    </source>
</reference>
<gene>
    <name type="primary">vapB1</name>
    <name type="ordered locus">RF_0457</name>
</gene>